<evidence type="ECO:0000255" key="1">
    <source>
        <dbReference type="HAMAP-Rule" id="MF_00373"/>
    </source>
</evidence>
<evidence type="ECO:0000305" key="2"/>
<gene>
    <name evidence="1" type="primary">rpmB</name>
    <name type="ordered locus">LEPBI_I1020</name>
</gene>
<feature type="chain" id="PRO_1000121652" description="Large ribosomal subunit protein bL28">
    <location>
        <begin position="1"/>
        <end position="96"/>
    </location>
</feature>
<reference key="1">
    <citation type="journal article" date="2008" name="PLoS ONE">
        <title>Genome sequence of the saprophyte Leptospira biflexa provides insights into the evolution of Leptospira and the pathogenesis of leptospirosis.</title>
        <authorList>
            <person name="Picardeau M."/>
            <person name="Bulach D.M."/>
            <person name="Bouchier C."/>
            <person name="Zuerner R.L."/>
            <person name="Zidane N."/>
            <person name="Wilson P.J."/>
            <person name="Creno S."/>
            <person name="Kuczek E.S."/>
            <person name="Bommezzadri S."/>
            <person name="Davis J.C."/>
            <person name="McGrath A."/>
            <person name="Johnson M.J."/>
            <person name="Boursaux-Eude C."/>
            <person name="Seemann T."/>
            <person name="Rouy Z."/>
            <person name="Coppel R.L."/>
            <person name="Rood J.I."/>
            <person name="Lajus A."/>
            <person name="Davies J.K."/>
            <person name="Medigue C."/>
            <person name="Adler B."/>
        </authorList>
    </citation>
    <scope>NUCLEOTIDE SEQUENCE [LARGE SCALE GENOMIC DNA]</scope>
    <source>
        <strain>Patoc 1 / ATCC 23582 / Paris</strain>
    </source>
</reference>
<keyword id="KW-1185">Reference proteome</keyword>
<keyword id="KW-0687">Ribonucleoprotein</keyword>
<keyword id="KW-0689">Ribosomal protein</keyword>
<organism>
    <name type="scientific">Leptospira biflexa serovar Patoc (strain Patoc 1 / ATCC 23582 / Paris)</name>
    <dbReference type="NCBI Taxonomy" id="456481"/>
    <lineage>
        <taxon>Bacteria</taxon>
        <taxon>Pseudomonadati</taxon>
        <taxon>Spirochaetota</taxon>
        <taxon>Spirochaetia</taxon>
        <taxon>Leptospirales</taxon>
        <taxon>Leptospiraceae</taxon>
        <taxon>Leptospira</taxon>
    </lineage>
</organism>
<accession>B0SMJ9</accession>
<dbReference type="EMBL" id="CP000786">
    <property type="protein sequence ID" value="ABZ97143.1"/>
    <property type="molecule type" value="Genomic_DNA"/>
</dbReference>
<dbReference type="RefSeq" id="WP_012388025.1">
    <property type="nucleotide sequence ID" value="NC_010602.1"/>
</dbReference>
<dbReference type="SMR" id="B0SMJ9"/>
<dbReference type="STRING" id="456481.LEPBI_I1020"/>
<dbReference type="KEGG" id="lbi:LEPBI_I1020"/>
<dbReference type="HOGENOM" id="CLU_064548_3_0_12"/>
<dbReference type="OrthoDB" id="9805609at2"/>
<dbReference type="BioCyc" id="LBIF456481:LEPBI_RS05010-MONOMER"/>
<dbReference type="Proteomes" id="UP000001847">
    <property type="component" value="Chromosome I"/>
</dbReference>
<dbReference type="GO" id="GO:1990904">
    <property type="term" value="C:ribonucleoprotein complex"/>
    <property type="evidence" value="ECO:0007669"/>
    <property type="project" value="UniProtKB-KW"/>
</dbReference>
<dbReference type="GO" id="GO:0005840">
    <property type="term" value="C:ribosome"/>
    <property type="evidence" value="ECO:0007669"/>
    <property type="project" value="UniProtKB-KW"/>
</dbReference>
<dbReference type="GO" id="GO:0003735">
    <property type="term" value="F:structural constituent of ribosome"/>
    <property type="evidence" value="ECO:0007669"/>
    <property type="project" value="InterPro"/>
</dbReference>
<dbReference type="GO" id="GO:0006412">
    <property type="term" value="P:translation"/>
    <property type="evidence" value="ECO:0007669"/>
    <property type="project" value="UniProtKB-UniRule"/>
</dbReference>
<dbReference type="Gene3D" id="2.30.170.40">
    <property type="entry name" value="Ribosomal protein L28/L24"/>
    <property type="match status" value="1"/>
</dbReference>
<dbReference type="HAMAP" id="MF_00373">
    <property type="entry name" value="Ribosomal_bL28"/>
    <property type="match status" value="1"/>
</dbReference>
<dbReference type="InterPro" id="IPR026569">
    <property type="entry name" value="Ribosomal_bL28"/>
</dbReference>
<dbReference type="InterPro" id="IPR034704">
    <property type="entry name" value="Ribosomal_bL28/bL31-like_sf"/>
</dbReference>
<dbReference type="InterPro" id="IPR001383">
    <property type="entry name" value="Ribosomal_bL28_bact-type"/>
</dbReference>
<dbReference type="InterPro" id="IPR037147">
    <property type="entry name" value="Ribosomal_bL28_sf"/>
</dbReference>
<dbReference type="NCBIfam" id="TIGR00009">
    <property type="entry name" value="L28"/>
    <property type="match status" value="1"/>
</dbReference>
<dbReference type="PANTHER" id="PTHR13528">
    <property type="entry name" value="39S RIBOSOMAL PROTEIN L28, MITOCHONDRIAL"/>
    <property type="match status" value="1"/>
</dbReference>
<dbReference type="PANTHER" id="PTHR13528:SF2">
    <property type="entry name" value="LARGE RIBOSOMAL SUBUNIT PROTEIN BL28M"/>
    <property type="match status" value="1"/>
</dbReference>
<dbReference type="Pfam" id="PF00830">
    <property type="entry name" value="Ribosomal_L28"/>
    <property type="match status" value="1"/>
</dbReference>
<dbReference type="SUPFAM" id="SSF143800">
    <property type="entry name" value="L28p-like"/>
    <property type="match status" value="1"/>
</dbReference>
<sequence length="96" mass="10675">MARTCVVTGKGTTAGNNVSHSHKKNRRIWKVNVITKKIFLEDENRWVRVKISTRALRTLRKKGLKVAIKDHGGDITAITPKKYVGITPKAQPVATA</sequence>
<protein>
    <recommendedName>
        <fullName evidence="1">Large ribosomal subunit protein bL28</fullName>
    </recommendedName>
    <alternativeName>
        <fullName evidence="2">50S ribosomal protein L28</fullName>
    </alternativeName>
</protein>
<proteinExistence type="inferred from homology"/>
<name>RL28_LEPBP</name>
<comment type="similarity">
    <text evidence="1">Belongs to the bacterial ribosomal protein bL28 family.</text>
</comment>